<sequence length="247" mass="27305">MNIIPCSIKTLKGLYDISGVEVGQHFYWQIGGFQIHAQVLITSWVVITILLGSVIIAVRNPQTIPTDGQNFFEYVLEFIRDLSKTQIGEEYGPWVPFIGTMFLFIFVSNWSGALLPWKIIQLPHGELAAPTNDINTTVALALLTSAAYFYAGLSKKGLSYFEKYIKPTPILLPINILEDFTKPLSLSFRLFGNILADELVVVVLVSLVPLVVPIPVMFLGLFTSGIQALIFATLAAAYIGESMEGHH</sequence>
<gene>
    <name evidence="1" type="primary">atpI</name>
    <name type="ordered locus">LOC_Osp1g00280</name>
    <name type="ORF">Nip041</name>
</gene>
<reference key="1">
    <citation type="journal article" date="1989" name="Mol. Gen. Genet.">
        <title>The complete sequence of the rice (Oryza sativa) chloroplast genome: intermolecular recombination between distinct tRNA genes accounts for a major plastid DNA inversion during the evolution of the cereals.</title>
        <authorList>
            <person name="Hiratsuka J."/>
            <person name="Shimada H."/>
            <person name="Whittier R."/>
            <person name="Ishibashi T."/>
            <person name="Sakamoto M."/>
            <person name="Mori M."/>
            <person name="Kondo C."/>
            <person name="Honji Y."/>
            <person name="Sun C.-R."/>
            <person name="Meng B.-Y."/>
            <person name="Li Y.-Q."/>
            <person name="Kanno A."/>
            <person name="Nishizawa Y."/>
            <person name="Hirai A."/>
            <person name="Shinozaki K."/>
            <person name="Sugiura M."/>
        </authorList>
    </citation>
    <scope>NUCLEOTIDE SEQUENCE [LARGE SCALE GENOMIC DNA]</scope>
    <source>
        <strain>cv. Nipponbare</strain>
    </source>
</reference>
<reference key="2">
    <citation type="journal article" date="2004" name="Plant Physiol.">
        <title>A comparison of rice chloroplast genomes.</title>
        <authorList>
            <person name="Tang J."/>
            <person name="Xia H."/>
            <person name="Cao M."/>
            <person name="Zhang X."/>
            <person name="Zeng W."/>
            <person name="Hu S."/>
            <person name="Tong W."/>
            <person name="Wang J."/>
            <person name="Wang J."/>
            <person name="Yu J."/>
            <person name="Yang H."/>
            <person name="Zhu L."/>
        </authorList>
    </citation>
    <scope>NUCLEOTIDE SEQUENCE [LARGE SCALE GENOMIC DNA]</scope>
    <source>
        <strain>cv. Nipponbare</strain>
    </source>
</reference>
<evidence type="ECO:0000255" key="1">
    <source>
        <dbReference type="HAMAP-Rule" id="MF_01393"/>
    </source>
</evidence>
<evidence type="ECO:0000305" key="2"/>
<proteinExistence type="inferred from homology"/>
<geneLocation type="chloroplast"/>
<comment type="function">
    <text evidence="1">Key component of the proton channel; it plays a direct role in the translocation of protons across the membrane.</text>
</comment>
<comment type="subunit">
    <text evidence="1">F-type ATPases have 2 components, CF(1) - the catalytic core - and CF(0) - the membrane proton channel. CF(1) has five subunits: alpha(3), beta(3), gamma(1), delta(1), epsilon(1). CF(0) has four main subunits: a, b, b' and c.</text>
</comment>
<comment type="subcellular location">
    <subcellularLocation>
        <location evidence="1">Plastid</location>
        <location evidence="1">Chloroplast thylakoid membrane</location>
        <topology evidence="1">Multi-pass membrane protein</topology>
    </subcellularLocation>
</comment>
<comment type="similarity">
    <text evidence="1">Belongs to the ATPase A chain family.</text>
</comment>
<comment type="sequence caution" evidence="2">
    <conflict type="erroneous initiation">
        <sequence resource="EMBL-CDS" id="AAS46115"/>
    </conflict>
</comment>
<keyword id="KW-0066">ATP synthesis</keyword>
<keyword id="KW-0138">CF(0)</keyword>
<keyword id="KW-0150">Chloroplast</keyword>
<keyword id="KW-0375">Hydrogen ion transport</keyword>
<keyword id="KW-0406">Ion transport</keyword>
<keyword id="KW-0472">Membrane</keyword>
<keyword id="KW-0934">Plastid</keyword>
<keyword id="KW-1185">Reference proteome</keyword>
<keyword id="KW-0793">Thylakoid</keyword>
<keyword id="KW-0812">Transmembrane</keyword>
<keyword id="KW-1133">Transmembrane helix</keyword>
<keyword id="KW-0813">Transport</keyword>
<feature type="chain" id="PRO_0000288515" description="ATP synthase subunit a, chloroplastic">
    <location>
        <begin position="1"/>
        <end position="247"/>
    </location>
</feature>
<feature type="transmembrane region" description="Helical" evidence="1">
    <location>
        <begin position="38"/>
        <end position="58"/>
    </location>
</feature>
<feature type="transmembrane region" description="Helical" evidence="1">
    <location>
        <begin position="95"/>
        <end position="115"/>
    </location>
</feature>
<feature type="transmembrane region" description="Helical" evidence="1">
    <location>
        <begin position="134"/>
        <end position="154"/>
    </location>
</feature>
<feature type="transmembrane region" description="Helical" evidence="1">
    <location>
        <begin position="199"/>
        <end position="219"/>
    </location>
</feature>
<feature type="transmembrane region" description="Helical" evidence="1">
    <location>
        <begin position="220"/>
        <end position="240"/>
    </location>
</feature>
<organism>
    <name type="scientific">Oryza sativa subsp. japonica</name>
    <name type="common">Rice</name>
    <dbReference type="NCBI Taxonomy" id="39947"/>
    <lineage>
        <taxon>Eukaryota</taxon>
        <taxon>Viridiplantae</taxon>
        <taxon>Streptophyta</taxon>
        <taxon>Embryophyta</taxon>
        <taxon>Tracheophyta</taxon>
        <taxon>Spermatophyta</taxon>
        <taxon>Magnoliopsida</taxon>
        <taxon>Liliopsida</taxon>
        <taxon>Poales</taxon>
        <taxon>Poaceae</taxon>
        <taxon>BOP clade</taxon>
        <taxon>Oryzoideae</taxon>
        <taxon>Oryzeae</taxon>
        <taxon>Oryzinae</taxon>
        <taxon>Oryza</taxon>
        <taxon>Oryza sativa</taxon>
    </lineage>
</organism>
<dbReference type="EMBL" id="X15901">
    <property type="protein sequence ID" value="CAA33990.1"/>
    <property type="molecule type" value="Genomic_DNA"/>
</dbReference>
<dbReference type="EMBL" id="AY522330">
    <property type="protein sequence ID" value="AAS46115.1"/>
    <property type="status" value="ALT_INIT"/>
    <property type="molecule type" value="Genomic_DNA"/>
</dbReference>
<dbReference type="PIR" id="JQ0217">
    <property type="entry name" value="LWRZ6"/>
</dbReference>
<dbReference type="RefSeq" id="NP_039377.1">
    <property type="nucleotide sequence ID" value="NC_001320.1"/>
</dbReference>
<dbReference type="SMR" id="P0C2Y7"/>
<dbReference type="FunCoup" id="P0C2Y7">
    <property type="interactions" value="214"/>
</dbReference>
<dbReference type="STRING" id="39947.P0C2Y7"/>
<dbReference type="PaxDb" id="39947-P0C2Y7"/>
<dbReference type="EnsemblPlants" id="transcript-atpI">
    <property type="protein sequence ID" value="cds-CAA33990.1"/>
    <property type="gene ID" value="gene-atpI"/>
</dbReference>
<dbReference type="GeneID" id="3131393"/>
<dbReference type="Gramene" id="transcript-atpI">
    <property type="protein sequence ID" value="cds-CAA33990.1"/>
    <property type="gene ID" value="gene-atpI"/>
</dbReference>
<dbReference type="KEGG" id="dosa:atpI"/>
<dbReference type="KEGG" id="osa:3131393"/>
<dbReference type="InParanoid" id="P0C2Y7"/>
<dbReference type="OrthoDB" id="734380at2759"/>
<dbReference type="Proteomes" id="UP000059680">
    <property type="component" value="Chloroplast"/>
</dbReference>
<dbReference type="GO" id="GO:0009535">
    <property type="term" value="C:chloroplast thylakoid membrane"/>
    <property type="evidence" value="ECO:0007669"/>
    <property type="project" value="UniProtKB-SubCell"/>
</dbReference>
<dbReference type="GO" id="GO:0005886">
    <property type="term" value="C:plasma membrane"/>
    <property type="evidence" value="ECO:0007669"/>
    <property type="project" value="UniProtKB-UniRule"/>
</dbReference>
<dbReference type="GO" id="GO:0009536">
    <property type="term" value="C:plastid"/>
    <property type="evidence" value="ECO:0000305"/>
    <property type="project" value="Gramene"/>
</dbReference>
<dbReference type="GO" id="GO:0045259">
    <property type="term" value="C:proton-transporting ATP synthase complex"/>
    <property type="evidence" value="ECO:0007669"/>
    <property type="project" value="UniProtKB-KW"/>
</dbReference>
<dbReference type="GO" id="GO:0046933">
    <property type="term" value="F:proton-transporting ATP synthase activity, rotational mechanism"/>
    <property type="evidence" value="ECO:0007669"/>
    <property type="project" value="UniProtKB-UniRule"/>
</dbReference>
<dbReference type="CDD" id="cd00310">
    <property type="entry name" value="ATP-synt_Fo_a_6"/>
    <property type="match status" value="1"/>
</dbReference>
<dbReference type="FunFam" id="1.20.120.220:FF:000001">
    <property type="entry name" value="ATP synthase subunit a, chloroplastic"/>
    <property type="match status" value="1"/>
</dbReference>
<dbReference type="Gene3D" id="1.20.120.220">
    <property type="entry name" value="ATP synthase, F0 complex, subunit A"/>
    <property type="match status" value="1"/>
</dbReference>
<dbReference type="HAMAP" id="MF_01393">
    <property type="entry name" value="ATP_synth_a_bact"/>
    <property type="match status" value="1"/>
</dbReference>
<dbReference type="InterPro" id="IPR045082">
    <property type="entry name" value="ATP_syn_F0_a_bact/chloroplast"/>
</dbReference>
<dbReference type="InterPro" id="IPR000568">
    <property type="entry name" value="ATP_synth_F0_asu"/>
</dbReference>
<dbReference type="InterPro" id="IPR023011">
    <property type="entry name" value="ATP_synth_F0_asu_AS"/>
</dbReference>
<dbReference type="InterPro" id="IPR035908">
    <property type="entry name" value="F0_ATP_A_sf"/>
</dbReference>
<dbReference type="NCBIfam" id="TIGR01131">
    <property type="entry name" value="ATP_synt_6_or_A"/>
    <property type="match status" value="1"/>
</dbReference>
<dbReference type="PANTHER" id="PTHR42823">
    <property type="entry name" value="ATP SYNTHASE SUBUNIT A, CHLOROPLASTIC"/>
    <property type="match status" value="1"/>
</dbReference>
<dbReference type="PANTHER" id="PTHR42823:SF3">
    <property type="entry name" value="ATP SYNTHASE SUBUNIT A, CHLOROPLASTIC"/>
    <property type="match status" value="1"/>
</dbReference>
<dbReference type="Pfam" id="PF00119">
    <property type="entry name" value="ATP-synt_A"/>
    <property type="match status" value="1"/>
</dbReference>
<dbReference type="PRINTS" id="PR00123">
    <property type="entry name" value="ATPASEA"/>
</dbReference>
<dbReference type="SUPFAM" id="SSF81336">
    <property type="entry name" value="F1F0 ATP synthase subunit A"/>
    <property type="match status" value="1"/>
</dbReference>
<dbReference type="PROSITE" id="PS00449">
    <property type="entry name" value="ATPASE_A"/>
    <property type="match status" value="1"/>
</dbReference>
<protein>
    <recommendedName>
        <fullName evidence="1">ATP synthase subunit a, chloroplastic</fullName>
    </recommendedName>
    <alternativeName>
        <fullName evidence="1">ATP synthase F0 sector subunit a</fullName>
    </alternativeName>
    <alternativeName>
        <fullName evidence="1">F-ATPase subunit IV</fullName>
    </alternativeName>
</protein>
<accession>P0C2Y7</accession>
<accession>P12083</accession>
<accession>Q6QY16</accession>
<accession>Q6QY79</accession>
<name>ATPI_ORYSJ</name>